<organism>
    <name type="scientific">Streptococcus pyogenes serotype M3 (strain ATCC BAA-595 / MGAS315)</name>
    <dbReference type="NCBI Taxonomy" id="198466"/>
    <lineage>
        <taxon>Bacteria</taxon>
        <taxon>Bacillati</taxon>
        <taxon>Bacillota</taxon>
        <taxon>Bacilli</taxon>
        <taxon>Lactobacillales</taxon>
        <taxon>Streptococcaceae</taxon>
        <taxon>Streptococcus</taxon>
    </lineage>
</organism>
<dbReference type="EC" id="3.5.3.6" evidence="2"/>
<dbReference type="EMBL" id="AF468045">
    <property type="protein sequence ID" value="AAM22954.1"/>
    <property type="molecule type" value="Genomic_DNA"/>
</dbReference>
<dbReference type="EMBL" id="AE014074">
    <property type="protein sequence ID" value="AAM79803.1"/>
    <property type="molecule type" value="Genomic_DNA"/>
</dbReference>
<dbReference type="RefSeq" id="WP_011054721.1">
    <property type="nucleotide sequence ID" value="NC_004070.1"/>
</dbReference>
<dbReference type="SMR" id="P0CZ64"/>
<dbReference type="KEGG" id="spg:SpyM3_1196"/>
<dbReference type="HOGENOM" id="CLU_052662_0_1_9"/>
<dbReference type="UniPathway" id="UPA00254">
    <property type="reaction ID" value="UER00364"/>
</dbReference>
<dbReference type="Proteomes" id="UP000000564">
    <property type="component" value="Chromosome"/>
</dbReference>
<dbReference type="GO" id="GO:0005737">
    <property type="term" value="C:cytoplasm"/>
    <property type="evidence" value="ECO:0007669"/>
    <property type="project" value="UniProtKB-SubCell"/>
</dbReference>
<dbReference type="GO" id="GO:0016990">
    <property type="term" value="F:arginine deiminase activity"/>
    <property type="evidence" value="ECO:0007669"/>
    <property type="project" value="UniProtKB-UniRule"/>
</dbReference>
<dbReference type="GO" id="GO:0019547">
    <property type="term" value="P:arginine catabolic process to ornithine"/>
    <property type="evidence" value="ECO:0007669"/>
    <property type="project" value="UniProtKB-UniRule"/>
</dbReference>
<dbReference type="GO" id="GO:0019546">
    <property type="term" value="P:arginine deiminase pathway"/>
    <property type="evidence" value="ECO:0007669"/>
    <property type="project" value="TreeGrafter"/>
</dbReference>
<dbReference type="Gene3D" id="1.10.3930.10">
    <property type="entry name" value="Arginine deiminase"/>
    <property type="match status" value="1"/>
</dbReference>
<dbReference type="Gene3D" id="3.75.10.10">
    <property type="entry name" value="L-arginine/glycine Amidinotransferase, Chain A"/>
    <property type="match status" value="1"/>
</dbReference>
<dbReference type="HAMAP" id="MF_00242">
    <property type="entry name" value="Arg_deiminase"/>
    <property type="match status" value="1"/>
</dbReference>
<dbReference type="InterPro" id="IPR003876">
    <property type="entry name" value="Arg_deiminase"/>
</dbReference>
<dbReference type="NCBIfam" id="TIGR01078">
    <property type="entry name" value="arcA"/>
    <property type="match status" value="1"/>
</dbReference>
<dbReference type="NCBIfam" id="NF002381">
    <property type="entry name" value="PRK01388.1"/>
    <property type="match status" value="1"/>
</dbReference>
<dbReference type="PANTHER" id="PTHR47271">
    <property type="entry name" value="ARGININE DEIMINASE"/>
    <property type="match status" value="1"/>
</dbReference>
<dbReference type="PANTHER" id="PTHR47271:SF2">
    <property type="entry name" value="ARGININE DEIMINASE"/>
    <property type="match status" value="1"/>
</dbReference>
<dbReference type="Pfam" id="PF02274">
    <property type="entry name" value="ADI"/>
    <property type="match status" value="1"/>
</dbReference>
<dbReference type="PIRSF" id="PIRSF006356">
    <property type="entry name" value="Arg_deiminase"/>
    <property type="match status" value="1"/>
</dbReference>
<dbReference type="PRINTS" id="PR01466">
    <property type="entry name" value="ARGDEIMINASE"/>
</dbReference>
<dbReference type="SUPFAM" id="SSF55909">
    <property type="entry name" value="Pentein"/>
    <property type="match status" value="1"/>
</dbReference>
<reference key="1">
    <citation type="journal article" date="2003" name="Microb. Pathog.">
        <title>Influence of group A streptococcal acid glycoprotein on expression of major virulence factors and internalization by epithelial cells.</title>
        <authorList>
            <person name="Marouni M.J."/>
            <person name="Ziomek E."/>
            <person name="Sela S."/>
        </authorList>
    </citation>
    <scope>NUCLEOTIDE SEQUENCE [GENOMIC DNA]</scope>
    <source>
        <strain>SP 268 / Serotype M3</strain>
    </source>
</reference>
<reference key="2">
    <citation type="journal article" date="2002" name="Proc. Natl. Acad. Sci. U.S.A.">
        <title>Genome sequence of a serotype M3 strain of group A Streptococcus: phage-encoded toxins, the high-virulence phenotype, and clone emergence.</title>
        <authorList>
            <person name="Beres S.B."/>
            <person name="Sylva G.L."/>
            <person name="Barbian K.D."/>
            <person name="Lei B."/>
            <person name="Hoff J.S."/>
            <person name="Mammarella N.D."/>
            <person name="Liu M.-Y."/>
            <person name="Smoot J.C."/>
            <person name="Porcella S.F."/>
            <person name="Parkins L.D."/>
            <person name="Campbell D.S."/>
            <person name="Smith T.M."/>
            <person name="McCormick J.K."/>
            <person name="Leung D.Y.M."/>
            <person name="Schlievert P.M."/>
            <person name="Musser J.M."/>
        </authorList>
    </citation>
    <scope>NUCLEOTIDE SEQUENCE [LARGE SCALE GENOMIC DNA]</scope>
    <source>
        <strain>ATCC BAA-595 / MGAS315</strain>
    </source>
</reference>
<keyword id="KW-0056">Arginine metabolism</keyword>
<keyword id="KW-0963">Cytoplasm</keyword>
<keyword id="KW-0325">Glycoprotein</keyword>
<keyword id="KW-0378">Hydrolase</keyword>
<accession>P0CZ64</accession>
<accession>Q8K5F0</accession>
<sequence length="411" mass="46256">MTAQTPIHVYSEIGKLKKVLLHRPGKEIENLMPDYLERLLFDDIPFLEDAQKEHDAFAQALRDEGIEVLYLETLAAESLVTPEIREAFIDEYLSEANIRGRATKKAIRELLMAIEDNQELIEKTMAGVQKSELPEIPASEKGLTDLVESSYPFAIDPMPNLYFTRDPFATIGTGVSLNHMFSETRNRETLYGKYIFTHHPIYGGGKVPMVYDRNETTRIEGGDELVLSKDVLAVGISQRTDAASIEKLLVNIFKQNLGFKKVLAFEFANNRKFMHLDTVFTMVDYDKFTIHPEIEGDLRVYSVTYDNEELHIVEEKGDLADLLAANLGVEKVDLIRCGGDNLVAAGREQWNDGSNTLTIAPGVVVVYNRNTITNAILESKGLKLIKIHGSELVRGRGGPRCMSMPFEREDI</sequence>
<feature type="initiator methionine" description="Removed" evidence="1">
    <location>
        <position position="1"/>
    </location>
</feature>
<feature type="chain" id="PRO_0000182249" description="Arginine deiminase">
    <location>
        <begin position="2"/>
        <end position="411"/>
    </location>
</feature>
<feature type="active site" description="Amidino-cysteine intermediate" evidence="2">
    <location>
        <position position="401"/>
    </location>
</feature>
<proteinExistence type="inferred from homology"/>
<name>ARCA_STRP3</name>
<evidence type="ECO:0000250" key="1"/>
<evidence type="ECO:0000255" key="2">
    <source>
        <dbReference type="HAMAP-Rule" id="MF_00242"/>
    </source>
</evidence>
<gene>
    <name evidence="2" type="primary">arcA</name>
    <name type="synonym">sagP</name>
    <name type="ordered locus">SpyM3_1196</name>
</gene>
<comment type="catalytic activity">
    <reaction evidence="2">
        <text>L-arginine + H2O = L-citrulline + NH4(+)</text>
        <dbReference type="Rhea" id="RHEA:19597"/>
        <dbReference type="ChEBI" id="CHEBI:15377"/>
        <dbReference type="ChEBI" id="CHEBI:28938"/>
        <dbReference type="ChEBI" id="CHEBI:32682"/>
        <dbReference type="ChEBI" id="CHEBI:57743"/>
        <dbReference type="EC" id="3.5.3.6"/>
    </reaction>
</comment>
<comment type="pathway">
    <text evidence="2">Amino-acid degradation; L-arginine degradation via ADI pathway; carbamoyl phosphate from L-arginine: step 1/2.</text>
</comment>
<comment type="subcellular location">
    <subcellularLocation>
        <location evidence="2">Cytoplasm</location>
    </subcellularLocation>
</comment>
<comment type="PTM">
    <text evidence="1">Glycosylated.</text>
</comment>
<comment type="similarity">
    <text evidence="2">Belongs to the arginine deiminase family.</text>
</comment>
<protein>
    <recommendedName>
        <fullName evidence="2">Arginine deiminase</fullName>
        <shortName evidence="2">ADI</shortName>
        <ecNumber evidence="2">3.5.3.6</ecNumber>
    </recommendedName>
    <alternativeName>
        <fullName evidence="2">Arginine dihydrolase</fullName>
        <shortName evidence="2">AD</shortName>
    </alternativeName>
    <alternativeName>
        <fullName>Streptococcal acid glycoprotein</fullName>
    </alternativeName>
</protein>